<evidence type="ECO:0000250" key="1">
    <source>
        <dbReference type="UniProtKB" id="Q9GZX6"/>
    </source>
</evidence>
<evidence type="ECO:0000255" key="2"/>
<evidence type="ECO:0000269" key="3">
    <source>
    </source>
</evidence>
<evidence type="ECO:0000269" key="4">
    <source>
    </source>
</evidence>
<evidence type="ECO:0000269" key="5">
    <source>
    </source>
</evidence>
<evidence type="ECO:0000269" key="6">
    <source>
    </source>
</evidence>
<evidence type="ECO:0000305" key="7"/>
<evidence type="ECO:0007744" key="8">
    <source>
        <dbReference type="PDB" id="6WEO"/>
    </source>
</evidence>
<evidence type="ECO:0007829" key="9">
    <source>
        <dbReference type="PDB" id="6WEO"/>
    </source>
</evidence>
<keyword id="KW-0002">3D-structure</keyword>
<keyword id="KW-0202">Cytokine</keyword>
<keyword id="KW-1015">Disulfide bond</keyword>
<keyword id="KW-0325">Glycoprotein</keyword>
<keyword id="KW-1185">Reference proteome</keyword>
<keyword id="KW-0964">Secreted</keyword>
<keyword id="KW-0732">Signal</keyword>
<protein>
    <recommendedName>
        <fullName>Interleukin-22</fullName>
        <shortName>IL-22</shortName>
    </recommendedName>
    <alternativeName>
        <fullName>IL-10-related T-cell-derived-inducible factor</fullName>
        <shortName>IL-TIF</shortName>
    </alternativeName>
    <alternativeName>
        <fullName>IL-TIF alpha</fullName>
    </alternativeName>
    <alternativeName>
        <fullName>Interleukin-22a</fullName>
        <shortName>IL-22a</shortName>
    </alternativeName>
</protein>
<feature type="signal peptide" evidence="2">
    <location>
        <begin position="1"/>
        <end position="33"/>
    </location>
</feature>
<feature type="chain" id="PRO_0000015384" description="Interleukin-22">
    <location>
        <begin position="34"/>
        <end position="179"/>
    </location>
</feature>
<feature type="glycosylation site" description="N-linked (GlcNAc...) asparagine" evidence="2">
    <location>
        <position position="54"/>
    </location>
</feature>
<feature type="glycosylation site" description="N-linked (GlcNAc...) asparagine" evidence="2">
    <location>
        <position position="68"/>
    </location>
</feature>
<feature type="glycosylation site" description="N-linked (GlcNAc...) asparagine" evidence="2">
    <location>
        <position position="97"/>
    </location>
</feature>
<feature type="disulfide bond" evidence="4 8">
    <location>
        <begin position="40"/>
        <end position="132"/>
    </location>
</feature>
<feature type="disulfide bond" evidence="4 8">
    <location>
        <begin position="89"/>
        <end position="178"/>
    </location>
</feature>
<feature type="helix" evidence="9">
    <location>
        <begin position="44"/>
        <end position="47"/>
    </location>
</feature>
<feature type="helix" evidence="9">
    <location>
        <begin position="50"/>
        <end position="64"/>
    </location>
</feature>
<feature type="strand" evidence="9">
    <location>
        <begin position="74"/>
        <end position="76"/>
    </location>
</feature>
<feature type="turn" evidence="9">
    <location>
        <begin position="77"/>
        <end position="79"/>
    </location>
</feature>
<feature type="helix" evidence="9">
    <location>
        <begin position="88"/>
        <end position="102"/>
    </location>
</feature>
<feature type="turn" evidence="9">
    <location>
        <begin position="106"/>
        <end position="109"/>
    </location>
</feature>
<feature type="helix" evidence="9">
    <location>
        <begin position="114"/>
        <end position="128"/>
    </location>
</feature>
<feature type="turn" evidence="9">
    <location>
        <begin position="129"/>
        <end position="131"/>
    </location>
</feature>
<feature type="helix" evidence="9">
    <location>
        <begin position="139"/>
        <end position="154"/>
    </location>
</feature>
<feature type="helix" evidence="9">
    <location>
        <begin position="156"/>
        <end position="165"/>
    </location>
</feature>
<feature type="helix" evidence="9">
    <location>
        <begin position="167"/>
        <end position="178"/>
    </location>
</feature>
<gene>
    <name type="primary">Il22</name>
    <name type="synonym">Il22a</name>
    <name type="synonym">Iltif</name>
    <name type="synonym">Iltifa</name>
</gene>
<reference key="1">
    <citation type="journal article" date="2000" name="J. Immunol.">
        <title>Cloning and characterization of IL-10-related T cell-derived inducible factor (IL-TIF), a novel cytokine structurally related to IL-10 and inducible by IL-9.</title>
        <authorList>
            <person name="Dumoutier L."/>
            <person name="Louahed J."/>
            <person name="Renauld J.-C."/>
        </authorList>
    </citation>
    <scope>NUCLEOTIDE SEQUENCE [MRNA]</scope>
    <source>
        <strain>AKR/J</strain>
    </source>
</reference>
<reference key="2">
    <citation type="journal article" date="2000" name="Genes Immun.">
        <title>IL-TIF/IL-22: genomic organization and mapping of the human and mouse genes.</title>
        <authorList>
            <person name="Dumoutier L."/>
            <person name="Van Roost E."/>
            <person name="Colau D."/>
            <person name="Ameye G."/>
            <person name="Michaux L."/>
            <person name="Renauld J.-C."/>
        </authorList>
    </citation>
    <scope>NUCLEOTIDE SEQUENCE</scope>
    <source>
        <strain>129</strain>
    </source>
</reference>
<reference key="3">
    <citation type="journal article" date="2004" name="Genome Res.">
        <title>The status, quality, and expansion of the NIH full-length cDNA project: the Mammalian Gene Collection (MGC).</title>
        <authorList>
            <consortium name="The MGC Project Team"/>
        </authorList>
    </citation>
    <scope>NUCLEOTIDE SEQUENCE [LARGE SCALE MRNA]</scope>
</reference>
<reference key="4">
    <citation type="journal article" date="2014" name="J. Biol. Chem.">
        <title>Glycogen synthase kinase-3beta stabilizes the interleukin (IL)-22 receptor from proteasomal degradation in murine lung epithelia.</title>
        <authorList>
            <person name="Weathington N.M."/>
            <person name="Snavely C.A."/>
            <person name="Chen B.B."/>
            <person name="Zhao J."/>
            <person name="Zhao Y."/>
            <person name="Mallampalli R.K."/>
        </authorList>
    </citation>
    <scope>FUNCTION</scope>
</reference>
<reference key="5">
    <citation type="journal article" date="2021" name="Front. Med.">
        <title>Reprogramming Intestinal Epithelial Cell Polarity by Interleukin-22.</title>
        <authorList>
            <person name="Delbue D."/>
            <person name="Lebenheim L."/>
            <person name="Cardoso-Silva D."/>
            <person name="Dony V."/>
            <person name="Krug S.M."/>
            <person name="Richter J.F."/>
            <person name="Manna S."/>
            <person name="Munoz M."/>
            <person name="Wolk K."/>
            <person name="Heldt C."/>
            <person name="Heimesaat M.M."/>
            <person name="Sabat R."/>
            <person name="Siegmund B."/>
            <person name="Schumann M."/>
        </authorList>
    </citation>
    <scope>FUNCTION</scope>
    <scope>DISRUPTION PHENOTYPE</scope>
</reference>
<reference key="6">
    <citation type="journal article" date="2022" name="Toxicol. Appl. Pharmacol.">
        <title>IL-22 regulates inflammatory responses to agricultural dust-induced airway inflammation.</title>
        <authorList>
            <person name="Ulu A."/>
            <person name="Sveiven S."/>
            <person name="Bilg A."/>
            <person name="Velazquez J.V."/>
            <person name="Diaz M."/>
            <person name="Mukherjee M."/>
            <person name="Yuil-Valdes A.G."/>
            <person name="Kota S."/>
            <person name="Burr A."/>
            <person name="Najera A."/>
            <person name="Nordgren T.M."/>
        </authorList>
    </citation>
    <scope>FUNCTION</scope>
    <scope>DISRUPTION PHENOTYPE</scope>
</reference>
<reference evidence="8" key="7">
    <citation type="journal article" date="2021" name="Immunity">
        <title>The tissue protective functions of interleukin-22 can be decoupled from pro-inflammatory actions through structure-based design.</title>
        <authorList>
            <person name="Saxton R.A."/>
            <person name="Henneberg L.T."/>
            <person name="Calafiore M."/>
            <person name="Su L."/>
            <person name="Jude K.M."/>
            <person name="Hanash A.M."/>
            <person name="Garcia K.C."/>
        </authorList>
    </citation>
    <scope>X-RAY CRYSTALLOGRAPHY (2.60 ANGSTROMS) OF 34-179</scope>
    <scope>DISULFIDE BONDS</scope>
    <scope>FUNCTION</scope>
</reference>
<comment type="function">
    <text evidence="1 3 4 5 6">Cytokine that plays a critical role in modulating tissue responses during inflammation (PubMed:33852830, PubMed:35525330). Plays an essential role in the regeneration of epithelial cells to maintain barrier function after injury and for the prevention of further tissue damage (PubMed:33912578). Unlike most of the cytokines, has no effect on immune cells. Signals through a heterodimeric receptor composed of two subunits, the specific receptor IL22RA1 which is present on non-immune cells in many organs and the shared subunit IL10RB. Ligation of IL22RA1 with IL22 induces activation of the tyrosine kinases JAK1 and TYK2, which in turn activates STAT3. In turn, promotes cell survival and proliferation through STAT3, ERK1/2 and PI3K/AKT pathways. Promotes phosphorylation of GSK3B at 'Ser-9' and CTTN (PubMed:24742671). Promotes epithelial cell spreading (PubMed:24742671).</text>
</comment>
<comment type="subcellular location">
    <subcellularLocation>
        <location>Secreted</location>
    </subcellularLocation>
</comment>
<comment type="disruption phenotype">
    <text evidence="5 6">Deletion mice have an enhanced response to agricultural dust as evidenced by an exacerbated increase in infiltrating immune cells and lung pathology as compared to wild-type controls (PubMed:35525330). In addition, T-gondii-infected mice display a significant defect of the epithelial barrier and an increase in macromolecular permeability when compared to wild-type mice (PubMed:33912578).</text>
</comment>
<comment type="similarity">
    <text evidence="7">Belongs to the IL-10 family.</text>
</comment>
<name>IL22_MOUSE</name>
<proteinExistence type="evidence at protein level"/>
<dbReference type="EMBL" id="AJ249491">
    <property type="protein sequence ID" value="CAB75546.1"/>
    <property type="molecule type" value="mRNA"/>
</dbReference>
<dbReference type="EMBL" id="AJ294727">
    <property type="protein sequence ID" value="CAC19435.1"/>
    <property type="molecule type" value="Genomic_DNA"/>
</dbReference>
<dbReference type="EMBL" id="BC116235">
    <property type="protein sequence ID" value="AAI16236.1"/>
    <property type="molecule type" value="mRNA"/>
</dbReference>
<dbReference type="CCDS" id="CCDS36070.1"/>
<dbReference type="RefSeq" id="NP_058667.1">
    <property type="nucleotide sequence ID" value="NM_016971.2"/>
</dbReference>
<dbReference type="RefSeq" id="XP_006513928.1">
    <property type="nucleotide sequence ID" value="XM_006513865.4"/>
</dbReference>
<dbReference type="PDB" id="6WEO">
    <property type="method" value="X-ray"/>
    <property type="resolution" value="2.60 A"/>
    <property type="chains" value="2/5/8/D/G/J/L/N/Q/T/W/Z=34-179"/>
</dbReference>
<dbReference type="PDBsum" id="6WEO"/>
<dbReference type="SMR" id="Q9JJY9"/>
<dbReference type="FunCoup" id="Q9JJY9">
    <property type="interactions" value="732"/>
</dbReference>
<dbReference type="MINT" id="Q9JJY9"/>
<dbReference type="STRING" id="10090.ENSMUSP00000094449"/>
<dbReference type="GlyCosmos" id="Q9JJY9">
    <property type="glycosylation" value="3 sites, No reported glycans"/>
</dbReference>
<dbReference type="GlyGen" id="Q9JJY9">
    <property type="glycosylation" value="3 sites"/>
</dbReference>
<dbReference type="PhosphoSitePlus" id="Q9JJY9"/>
<dbReference type="PaxDb" id="10090-ENSMUSP00000094449"/>
<dbReference type="ABCD" id="Q9JJY9">
    <property type="antibodies" value="4 sequenced antibodies"/>
</dbReference>
<dbReference type="DNASU" id="50929"/>
<dbReference type="Ensembl" id="ENSMUST00000096691.5">
    <property type="protein sequence ID" value="ENSMUSP00000094449.5"/>
    <property type="gene ID" value="ENSMUSG00000074695.4"/>
</dbReference>
<dbReference type="GeneID" id="50929"/>
<dbReference type="KEGG" id="mmu:50929"/>
<dbReference type="UCSC" id="uc007hdv.2">
    <property type="organism name" value="mouse"/>
</dbReference>
<dbReference type="AGR" id="MGI:1355307"/>
<dbReference type="CTD" id="50616"/>
<dbReference type="MGI" id="MGI:1355307">
    <property type="gene designation" value="Il22"/>
</dbReference>
<dbReference type="VEuPathDB" id="HostDB:ENSMUSG00000074695"/>
<dbReference type="eggNOG" id="ENOG502S5PC">
    <property type="taxonomic scope" value="Eukaryota"/>
</dbReference>
<dbReference type="GeneTree" id="ENSGT00510000048550"/>
<dbReference type="HOGENOM" id="CLU_127397_0_0_1"/>
<dbReference type="InParanoid" id="Q9JJY9"/>
<dbReference type="OMA" id="INFQQPY"/>
<dbReference type="OrthoDB" id="9451249at2759"/>
<dbReference type="PhylomeDB" id="Q9JJY9"/>
<dbReference type="TreeFam" id="TF333253"/>
<dbReference type="Reactome" id="R-MMU-8854691">
    <property type="pathway name" value="Interleukin-20 family signaling"/>
</dbReference>
<dbReference type="BioGRID-ORCS" id="50929">
    <property type="hits" value="2 hits in 56 CRISPR screens"/>
</dbReference>
<dbReference type="PRO" id="PR:Q9JJY9"/>
<dbReference type="Proteomes" id="UP000000589">
    <property type="component" value="Chromosome 10"/>
</dbReference>
<dbReference type="RNAct" id="Q9JJY9">
    <property type="molecule type" value="protein"/>
</dbReference>
<dbReference type="Bgee" id="ENSMUSG00000074695">
    <property type="expression patterns" value="Expressed in blastoderm cell in morula and 11 other cell types or tissues"/>
</dbReference>
<dbReference type="GO" id="GO:0005615">
    <property type="term" value="C:extracellular space"/>
    <property type="evidence" value="ECO:0000314"/>
    <property type="project" value="UniProt"/>
</dbReference>
<dbReference type="GO" id="GO:0005125">
    <property type="term" value="F:cytokine activity"/>
    <property type="evidence" value="ECO:0000314"/>
    <property type="project" value="UniProt"/>
</dbReference>
<dbReference type="GO" id="GO:0050728">
    <property type="term" value="P:negative regulation of inflammatory response"/>
    <property type="evidence" value="ECO:0000314"/>
    <property type="project" value="UniProt"/>
</dbReference>
<dbReference type="GO" id="GO:0045944">
    <property type="term" value="P:positive regulation of transcription by RNA polymerase II"/>
    <property type="evidence" value="ECO:0000314"/>
    <property type="project" value="MGI"/>
</dbReference>
<dbReference type="GO" id="GO:0072593">
    <property type="term" value="P:reactive oxygen species metabolic process"/>
    <property type="evidence" value="ECO:0000314"/>
    <property type="project" value="MGI"/>
</dbReference>
<dbReference type="FunFam" id="1.20.1250.10:FF:000032">
    <property type="entry name" value="Interleukin-22"/>
    <property type="match status" value="1"/>
</dbReference>
<dbReference type="Gene3D" id="1.20.1250.10">
    <property type="match status" value="1"/>
</dbReference>
<dbReference type="InterPro" id="IPR009079">
    <property type="entry name" value="4_helix_cytokine-like_core"/>
</dbReference>
<dbReference type="InterPro" id="IPR020423">
    <property type="entry name" value="IL-10_CS"/>
</dbReference>
<dbReference type="InterPro" id="IPR020453">
    <property type="entry name" value="IL-22"/>
</dbReference>
<dbReference type="PANTHER" id="PTHR48488">
    <property type="entry name" value="INTERLEUKIN-22"/>
    <property type="match status" value="1"/>
</dbReference>
<dbReference type="PANTHER" id="PTHR48488:SF1">
    <property type="entry name" value="INTERLEUKIN-22"/>
    <property type="match status" value="1"/>
</dbReference>
<dbReference type="Pfam" id="PF14565">
    <property type="entry name" value="IL22"/>
    <property type="match status" value="1"/>
</dbReference>
<dbReference type="PIRSF" id="PIRSF037726">
    <property type="entry name" value="Interleukin-22"/>
    <property type="match status" value="1"/>
</dbReference>
<dbReference type="PRINTS" id="PR01936">
    <property type="entry name" value="INTRLEUKIN22"/>
</dbReference>
<dbReference type="SUPFAM" id="SSF47266">
    <property type="entry name" value="4-helical cytokines"/>
    <property type="match status" value="1"/>
</dbReference>
<dbReference type="PROSITE" id="PS00520">
    <property type="entry name" value="INTERLEUKIN_10"/>
    <property type="match status" value="1"/>
</dbReference>
<accession>Q9JJY9</accession>
<accession>Q14BB3</accession>
<organism>
    <name type="scientific">Mus musculus</name>
    <name type="common">Mouse</name>
    <dbReference type="NCBI Taxonomy" id="10090"/>
    <lineage>
        <taxon>Eukaryota</taxon>
        <taxon>Metazoa</taxon>
        <taxon>Chordata</taxon>
        <taxon>Craniata</taxon>
        <taxon>Vertebrata</taxon>
        <taxon>Euteleostomi</taxon>
        <taxon>Mammalia</taxon>
        <taxon>Eutheria</taxon>
        <taxon>Euarchontoglires</taxon>
        <taxon>Glires</taxon>
        <taxon>Rodentia</taxon>
        <taxon>Myomorpha</taxon>
        <taxon>Muroidea</taxon>
        <taxon>Muridae</taxon>
        <taxon>Murinae</taxon>
        <taxon>Mus</taxon>
        <taxon>Mus</taxon>
    </lineage>
</organism>
<sequence length="179" mass="20106">MAVLQKSMSFSLMGTLAASCLLLIALWAQEANALPVNTRCKLEVSNFQQPYIVNRTFMLAKEASLADNNTDVRLIGEKLFRGVSAKDQCYLMKQVLNFTLEDVLLPQSDRFQPYMQEVVPFLTKLSNQLSSCHISGDDQNIQKNVRRLKETVKKLGESGEIKAIGELDLLFMSLRNACV</sequence>